<sequence length="98" mass="10949">MSLTYMNMFMAFTISLLGLLMYRSHMMSSLLCLEGMMLSLFVMMTMTILNTHLTLASMIPIILLVFAACEAALGLSLLVMVSTTYGMDYVQNLNLLQC</sequence>
<protein>
    <recommendedName>
        <fullName>NADH-ubiquinone oxidoreductase chain 4L</fullName>
        <ecNumber>7.1.1.2</ecNumber>
    </recommendedName>
    <alternativeName>
        <fullName>NADH dehydrogenase subunit 4L</fullName>
    </alternativeName>
</protein>
<dbReference type="EC" id="7.1.1.2"/>
<dbReference type="EMBL" id="DQ312370">
    <property type="protein sequence ID" value="ABC47526.1"/>
    <property type="molecule type" value="Genomic_DNA"/>
</dbReference>
<dbReference type="SMR" id="Q1HV35"/>
<dbReference type="GO" id="GO:0005743">
    <property type="term" value="C:mitochondrial inner membrane"/>
    <property type="evidence" value="ECO:0000250"/>
    <property type="project" value="UniProtKB"/>
</dbReference>
<dbReference type="GO" id="GO:0045271">
    <property type="term" value="C:respiratory chain complex I"/>
    <property type="evidence" value="ECO:0000250"/>
    <property type="project" value="UniProtKB"/>
</dbReference>
<dbReference type="GO" id="GO:0008137">
    <property type="term" value="F:NADH dehydrogenase (ubiquinone) activity"/>
    <property type="evidence" value="ECO:0000250"/>
    <property type="project" value="UniProtKB"/>
</dbReference>
<dbReference type="GO" id="GO:0042773">
    <property type="term" value="P:ATP synthesis coupled electron transport"/>
    <property type="evidence" value="ECO:0007669"/>
    <property type="project" value="InterPro"/>
</dbReference>
<dbReference type="FunFam" id="1.10.287.3510:FF:000002">
    <property type="entry name" value="NADH-ubiquinone oxidoreductase chain 4L"/>
    <property type="match status" value="1"/>
</dbReference>
<dbReference type="Gene3D" id="1.10.287.3510">
    <property type="match status" value="1"/>
</dbReference>
<dbReference type="InterPro" id="IPR001133">
    <property type="entry name" value="NADH_UbQ_OxRdtase_chain4L/K"/>
</dbReference>
<dbReference type="InterPro" id="IPR039428">
    <property type="entry name" value="NUOK/Mnh_C1-like"/>
</dbReference>
<dbReference type="PANTHER" id="PTHR11434:SF0">
    <property type="entry name" value="NADH-UBIQUINONE OXIDOREDUCTASE CHAIN 4L"/>
    <property type="match status" value="1"/>
</dbReference>
<dbReference type="PANTHER" id="PTHR11434">
    <property type="entry name" value="NADH-UBIQUINONE OXIDOREDUCTASE SUBUNIT ND4L"/>
    <property type="match status" value="1"/>
</dbReference>
<dbReference type="Pfam" id="PF00420">
    <property type="entry name" value="Oxidored_q2"/>
    <property type="match status" value="1"/>
</dbReference>
<name>NU4LM_CHITR</name>
<gene>
    <name type="primary">MT-ND4L</name>
    <name type="synonym">MTND4L</name>
    <name type="synonym">NADH4L</name>
    <name type="synonym">ND4L</name>
</gene>
<comment type="function">
    <text evidence="1">Core subunit of the mitochondrial membrane respiratory chain NADH dehydrogenase (Complex I) which catalyzes electron transfer from NADH through the respiratory chain, using ubiquinone as an electron acceptor. Part of the enzyme membrane arm which is embedded in the lipid bilayer and involved in proton translocation.</text>
</comment>
<comment type="catalytic activity">
    <reaction evidence="1">
        <text>a ubiquinone + NADH + 5 H(+)(in) = a ubiquinol + NAD(+) + 4 H(+)(out)</text>
        <dbReference type="Rhea" id="RHEA:29091"/>
        <dbReference type="Rhea" id="RHEA-COMP:9565"/>
        <dbReference type="Rhea" id="RHEA-COMP:9566"/>
        <dbReference type="ChEBI" id="CHEBI:15378"/>
        <dbReference type="ChEBI" id="CHEBI:16389"/>
        <dbReference type="ChEBI" id="CHEBI:17976"/>
        <dbReference type="ChEBI" id="CHEBI:57540"/>
        <dbReference type="ChEBI" id="CHEBI:57945"/>
        <dbReference type="EC" id="7.1.1.2"/>
    </reaction>
    <physiologicalReaction direction="left-to-right" evidence="1">
        <dbReference type="Rhea" id="RHEA:29092"/>
    </physiologicalReaction>
</comment>
<comment type="subunit">
    <text evidence="2">Core subunit of respiratory chain NADH dehydrogenase (Complex I) which is composed of 45 different subunits.</text>
</comment>
<comment type="subcellular location">
    <subcellularLocation>
        <location evidence="2">Mitochondrion inner membrane</location>
        <topology evidence="3">Multi-pass membrane protein</topology>
    </subcellularLocation>
</comment>
<comment type="similarity">
    <text evidence="4">Belongs to the complex I subunit 4L family.</text>
</comment>
<accession>Q1HV35</accession>
<keyword id="KW-0249">Electron transport</keyword>
<keyword id="KW-0472">Membrane</keyword>
<keyword id="KW-0496">Mitochondrion</keyword>
<keyword id="KW-0999">Mitochondrion inner membrane</keyword>
<keyword id="KW-0520">NAD</keyword>
<keyword id="KW-0679">Respiratory chain</keyword>
<keyword id="KW-1278">Translocase</keyword>
<keyword id="KW-0812">Transmembrane</keyword>
<keyword id="KW-1133">Transmembrane helix</keyword>
<keyword id="KW-0813">Transport</keyword>
<keyword id="KW-0830">Ubiquinone</keyword>
<evidence type="ECO:0000250" key="1">
    <source>
        <dbReference type="UniProtKB" id="P03901"/>
    </source>
</evidence>
<evidence type="ECO:0000250" key="2">
    <source>
        <dbReference type="UniProtKB" id="P03902"/>
    </source>
</evidence>
<evidence type="ECO:0000255" key="3"/>
<evidence type="ECO:0000305" key="4"/>
<proteinExistence type="inferred from homology"/>
<organism>
    <name type="scientific">Chiroderma trinitatum</name>
    <name type="common">Little big-eyed bat</name>
    <dbReference type="NCBI Taxonomy" id="27647"/>
    <lineage>
        <taxon>Eukaryota</taxon>
        <taxon>Metazoa</taxon>
        <taxon>Chordata</taxon>
        <taxon>Craniata</taxon>
        <taxon>Vertebrata</taxon>
        <taxon>Euteleostomi</taxon>
        <taxon>Mammalia</taxon>
        <taxon>Eutheria</taxon>
        <taxon>Laurasiatheria</taxon>
        <taxon>Chiroptera</taxon>
        <taxon>Yangochiroptera</taxon>
        <taxon>Phyllostomidae</taxon>
        <taxon>Stenodermatinae</taxon>
        <taxon>Chiroderma</taxon>
    </lineage>
</organism>
<geneLocation type="mitochondrion"/>
<reference key="1">
    <citation type="journal article" date="2006" name="Mol. Phylogenet. Evol.">
        <title>Molecular systematics of Vampyressine bats (Phyllostomidae: Stenodermatinae) with comparison of direct and indirect surveys of mitochondrial DNA variation.</title>
        <authorList>
            <person name="Hoofer S.R."/>
            <person name="Baker R.J."/>
        </authorList>
    </citation>
    <scope>NUCLEOTIDE SEQUENCE [GENOMIC DNA]</scope>
</reference>
<feature type="chain" id="PRO_0000274995" description="NADH-ubiquinone oxidoreductase chain 4L">
    <location>
        <begin position="1"/>
        <end position="98"/>
    </location>
</feature>
<feature type="transmembrane region" description="Helical" evidence="3">
    <location>
        <begin position="1"/>
        <end position="21"/>
    </location>
</feature>
<feature type="transmembrane region" description="Helical" evidence="3">
    <location>
        <begin position="29"/>
        <end position="49"/>
    </location>
</feature>
<feature type="transmembrane region" description="Helical" evidence="3">
    <location>
        <begin position="61"/>
        <end position="81"/>
    </location>
</feature>